<evidence type="ECO:0000250" key="1">
    <source>
        <dbReference type="UniProtKB" id="O14558"/>
    </source>
</evidence>
<evidence type="ECO:0000250" key="2">
    <source>
        <dbReference type="UniProtKB" id="P97541"/>
    </source>
</evidence>
<evidence type="ECO:0000255" key="3">
    <source>
        <dbReference type="PROSITE-ProRule" id="PRU00285"/>
    </source>
</evidence>
<evidence type="ECO:0000269" key="4">
    <source>
    </source>
</evidence>
<sequence length="162" mass="17521">MEIPVPVQPSWLRRASAPLPGFSAPGRLFDQRFGEGLLEAELASLCPAAIAPYYLRAPSVALPTAQVSTDSGYFSVLLDVKHFLPEEISVKVVDDHVEVHARHEERPDEHGFIAREFHRRYRLPPGVDPAAVTSALSPEGVLSIQATPASAQAQLPSPPAAK</sequence>
<dbReference type="EMBL" id="BC089621">
    <property type="protein sequence ID" value="AAH89621.1"/>
    <property type="molecule type" value="mRNA"/>
</dbReference>
<dbReference type="CCDS" id="CCDS21097.1"/>
<dbReference type="RefSeq" id="NP_001012401.1">
    <property type="nucleotide sequence ID" value="NM_001012401.3"/>
</dbReference>
<dbReference type="SMR" id="Q5EBG6"/>
<dbReference type="BioGRID" id="232583">
    <property type="interactions" value="3"/>
</dbReference>
<dbReference type="FunCoup" id="Q5EBG6">
    <property type="interactions" value="327"/>
</dbReference>
<dbReference type="IntAct" id="Q5EBG6">
    <property type="interactions" value="1"/>
</dbReference>
<dbReference type="STRING" id="10090.ENSMUSP00000039172"/>
<dbReference type="GlyGen" id="Q5EBG6">
    <property type="glycosylation" value="2 sites, 1 O-linked glycan (1 site)"/>
</dbReference>
<dbReference type="iPTMnet" id="Q5EBG6"/>
<dbReference type="PhosphoSitePlus" id="Q5EBG6"/>
<dbReference type="jPOST" id="Q5EBG6"/>
<dbReference type="PaxDb" id="10090-ENSMUSP00000039172"/>
<dbReference type="PeptideAtlas" id="Q5EBG6"/>
<dbReference type="ProteomicsDB" id="273281"/>
<dbReference type="Pumba" id="Q5EBG6"/>
<dbReference type="Antibodypedia" id="4537">
    <property type="antibodies" value="369 antibodies from 37 providers"/>
</dbReference>
<dbReference type="DNASU" id="243912"/>
<dbReference type="Ensembl" id="ENSMUST00000044048.8">
    <property type="protein sequence ID" value="ENSMUSP00000039172.8"/>
    <property type="gene ID" value="ENSMUSG00000036854.15"/>
</dbReference>
<dbReference type="GeneID" id="243912"/>
<dbReference type="KEGG" id="mmu:243912"/>
<dbReference type="UCSC" id="uc009gew.1">
    <property type="organism name" value="mouse"/>
</dbReference>
<dbReference type="AGR" id="MGI:2685325"/>
<dbReference type="CTD" id="126393"/>
<dbReference type="MGI" id="MGI:2685325">
    <property type="gene designation" value="Hspb6"/>
</dbReference>
<dbReference type="VEuPathDB" id="HostDB:ENSMUSG00000036854"/>
<dbReference type="eggNOG" id="KOG3591">
    <property type="taxonomic scope" value="Eukaryota"/>
</dbReference>
<dbReference type="GeneTree" id="ENSGT00940000161100"/>
<dbReference type="HOGENOM" id="CLU_095001_2_0_1"/>
<dbReference type="InParanoid" id="Q5EBG6"/>
<dbReference type="OMA" id="TIHHPWM"/>
<dbReference type="OrthoDB" id="1431247at2759"/>
<dbReference type="PhylomeDB" id="Q5EBG6"/>
<dbReference type="TreeFam" id="TF105049"/>
<dbReference type="BioGRID-ORCS" id="243912">
    <property type="hits" value="2 hits in 78 CRISPR screens"/>
</dbReference>
<dbReference type="ChiTaRS" id="Hspb6">
    <property type="organism name" value="mouse"/>
</dbReference>
<dbReference type="PRO" id="PR:Q5EBG6"/>
<dbReference type="Proteomes" id="UP000000589">
    <property type="component" value="Chromosome 7"/>
</dbReference>
<dbReference type="RNAct" id="Q5EBG6">
    <property type="molecule type" value="protein"/>
</dbReference>
<dbReference type="Bgee" id="ENSMUSG00000036854">
    <property type="expression patterns" value="Expressed in interventricular septum and 189 other cell types or tissues"/>
</dbReference>
<dbReference type="GO" id="GO:0005737">
    <property type="term" value="C:cytoplasm"/>
    <property type="evidence" value="ECO:0000250"/>
    <property type="project" value="UniProtKB"/>
</dbReference>
<dbReference type="GO" id="GO:0005829">
    <property type="term" value="C:cytosol"/>
    <property type="evidence" value="ECO:0007669"/>
    <property type="project" value="Ensembl"/>
</dbReference>
<dbReference type="GO" id="GO:0005576">
    <property type="term" value="C:extracellular region"/>
    <property type="evidence" value="ECO:0007669"/>
    <property type="project" value="UniProtKB-SubCell"/>
</dbReference>
<dbReference type="GO" id="GO:0005739">
    <property type="term" value="C:mitochondrion"/>
    <property type="evidence" value="ECO:0007669"/>
    <property type="project" value="Ensembl"/>
</dbReference>
<dbReference type="GO" id="GO:0016607">
    <property type="term" value="C:nuclear speck"/>
    <property type="evidence" value="ECO:0007669"/>
    <property type="project" value="Ensembl"/>
</dbReference>
<dbReference type="GO" id="GO:0005634">
    <property type="term" value="C:nucleus"/>
    <property type="evidence" value="ECO:0000250"/>
    <property type="project" value="UniProtKB"/>
</dbReference>
<dbReference type="GO" id="GO:0044183">
    <property type="term" value="F:protein folding chaperone"/>
    <property type="evidence" value="ECO:0007669"/>
    <property type="project" value="Ensembl"/>
</dbReference>
<dbReference type="GO" id="GO:0042803">
    <property type="term" value="F:protein homodimerization activity"/>
    <property type="evidence" value="ECO:0000250"/>
    <property type="project" value="UniProtKB"/>
</dbReference>
<dbReference type="GO" id="GO:0019901">
    <property type="term" value="F:protein kinase binding"/>
    <property type="evidence" value="ECO:0007669"/>
    <property type="project" value="Ensembl"/>
</dbReference>
<dbReference type="GO" id="GO:0051087">
    <property type="term" value="F:protein-folding chaperone binding"/>
    <property type="evidence" value="ECO:0007669"/>
    <property type="project" value="Ensembl"/>
</dbReference>
<dbReference type="GO" id="GO:0005212">
    <property type="term" value="F:structural constituent of eye lens"/>
    <property type="evidence" value="ECO:0007669"/>
    <property type="project" value="InterPro"/>
</dbReference>
<dbReference type="GO" id="GO:0051082">
    <property type="term" value="F:unfolded protein binding"/>
    <property type="evidence" value="ECO:0007669"/>
    <property type="project" value="Ensembl"/>
</dbReference>
<dbReference type="GO" id="GO:0061077">
    <property type="term" value="P:chaperone-mediated protein folding"/>
    <property type="evidence" value="ECO:0007669"/>
    <property type="project" value="Ensembl"/>
</dbReference>
<dbReference type="GO" id="GO:0010667">
    <property type="term" value="P:negative regulation of cardiac muscle cell apoptotic process"/>
    <property type="evidence" value="ECO:0007669"/>
    <property type="project" value="Ensembl"/>
</dbReference>
<dbReference type="GO" id="GO:0045766">
    <property type="term" value="P:positive regulation of angiogenesis"/>
    <property type="evidence" value="ECO:0007669"/>
    <property type="project" value="Ensembl"/>
</dbReference>
<dbReference type="CDD" id="cd06478">
    <property type="entry name" value="ACD_HspB4-5-6"/>
    <property type="match status" value="1"/>
</dbReference>
<dbReference type="FunFam" id="2.60.40.790:FF:000029">
    <property type="entry name" value="Putative heat shock protein beta-6"/>
    <property type="match status" value="1"/>
</dbReference>
<dbReference type="Gene3D" id="2.60.40.790">
    <property type="match status" value="1"/>
</dbReference>
<dbReference type="InterPro" id="IPR002068">
    <property type="entry name" value="A-crystallin/Hsp20_dom"/>
</dbReference>
<dbReference type="InterPro" id="IPR001436">
    <property type="entry name" value="Alpha-crystallin/sHSP_animal"/>
</dbReference>
<dbReference type="InterPro" id="IPR003090">
    <property type="entry name" value="Alpha-crystallin_N"/>
</dbReference>
<dbReference type="InterPro" id="IPR008978">
    <property type="entry name" value="HSP20-like_chaperone"/>
</dbReference>
<dbReference type="PANTHER" id="PTHR45640:SF36">
    <property type="entry name" value="HEAT SHOCK PROTEIN BETA-6"/>
    <property type="match status" value="1"/>
</dbReference>
<dbReference type="PANTHER" id="PTHR45640">
    <property type="entry name" value="HEAT SHOCK PROTEIN HSP-12.2-RELATED"/>
    <property type="match status" value="1"/>
</dbReference>
<dbReference type="Pfam" id="PF00525">
    <property type="entry name" value="Crystallin"/>
    <property type="match status" value="1"/>
</dbReference>
<dbReference type="Pfam" id="PF00011">
    <property type="entry name" value="HSP20"/>
    <property type="match status" value="1"/>
</dbReference>
<dbReference type="PRINTS" id="PR00299">
    <property type="entry name" value="ACRYSTALLIN"/>
</dbReference>
<dbReference type="SUPFAM" id="SSF49764">
    <property type="entry name" value="HSP20-like chaperones"/>
    <property type="match status" value="1"/>
</dbReference>
<dbReference type="PROSITE" id="PS01031">
    <property type="entry name" value="SHSP"/>
    <property type="match status" value="1"/>
</dbReference>
<comment type="function">
    <text evidence="1">Small heat shock protein which functions as a molecular chaperone probably maintaining denatured proteins in a folding-competent state. Seems to have versatile functions in various biological processes. Plays a role in regulating muscle function such as smooth muscle vasorelaxation and cardiac myocyte contractility. May regulate myocardial angiogenesis implicating KDR. Overexpression mediates cardioprotection and angiogenesis after induced damage. Stabilizes monomeric YWHAZ thereby supporting YWHAZ chaperone-like activity.</text>
</comment>
<comment type="subunit">
    <text evidence="1 2">Homodimer. Small heat shock proteins form high molecular mass oligomers containing variable number of monomers; these oligomers display a very flexible quaternary structure easily exchanging their subunits. Heterooligomer with HSPB1; formed through oligomerization of HSPB1:HSBP6 dimers; subunit exchange leads to formation of at least two different heterooligomeric complexes, differing in variable quantities of HSPB1 and HSPB6 homodimers in addition to HSPB1:HSPB6 heterodimers. Heterooligomer with CRYAB; large heterooligomers consist of CRYAB homodimers and HSPB5:HSPB6 heterodimers but lacking HSPB6 homodimers. Interacts with BAG3. Interacts (phosphorylated) with YWHAZ. Interacts with PDE4A and PDE4D; required for maintenance of the non-phosphorylated state of HSPB6 under basal conditions. Interacts with KDR. Interacts with PRKD1.</text>
</comment>
<comment type="subcellular location">
    <subcellularLocation>
        <location evidence="1">Cytoplasm</location>
    </subcellularLocation>
    <subcellularLocation>
        <location evidence="1">Nucleus</location>
    </subcellularLocation>
    <subcellularLocation>
        <location evidence="1">Secreted</location>
    </subcellularLocation>
    <text evidence="1">Translocates to nuclear foci during heat shock.</text>
</comment>
<comment type="PTM">
    <text evidence="1 2 4">Phosphorylated at Ser-16 by PKA and probably PKD1K; required to protect cardiomyocytes from apoptosis.</text>
</comment>
<comment type="similarity">
    <text evidence="3">Belongs to the small heat shock protein (HSP20) family.</text>
</comment>
<feature type="chain" id="PRO_0000246077" description="Heat shock protein beta-6">
    <location>
        <begin position="1"/>
        <end position="162"/>
    </location>
</feature>
<feature type="domain" description="sHSP" evidence="3">
    <location>
        <begin position="56"/>
        <end position="162"/>
    </location>
</feature>
<feature type="region of interest" description="Involved in stabilization of the HSPB1:HSBP6 heterodimer" evidence="1">
    <location>
        <begin position="1"/>
        <end position="72"/>
    </location>
</feature>
<feature type="modified residue" description="Phosphoserine" evidence="4">
    <location>
        <position position="16"/>
    </location>
</feature>
<feature type="modified residue" description="Deamidated glutamine" evidence="2">
    <location>
        <position position="66"/>
    </location>
</feature>
<feature type="modified residue" description="Phosphoserine" evidence="2">
    <location>
        <position position="157"/>
    </location>
</feature>
<proteinExistence type="evidence at protein level"/>
<accession>Q5EBG6</accession>
<protein>
    <recommendedName>
        <fullName>Heat shock protein beta-6</fullName>
        <shortName>HspB6</shortName>
    </recommendedName>
</protein>
<gene>
    <name type="primary">Hspb6</name>
    <name type="synonym">Gm479</name>
</gene>
<organism>
    <name type="scientific">Mus musculus</name>
    <name type="common">Mouse</name>
    <dbReference type="NCBI Taxonomy" id="10090"/>
    <lineage>
        <taxon>Eukaryota</taxon>
        <taxon>Metazoa</taxon>
        <taxon>Chordata</taxon>
        <taxon>Craniata</taxon>
        <taxon>Vertebrata</taxon>
        <taxon>Euteleostomi</taxon>
        <taxon>Mammalia</taxon>
        <taxon>Eutheria</taxon>
        <taxon>Euarchontoglires</taxon>
        <taxon>Glires</taxon>
        <taxon>Rodentia</taxon>
        <taxon>Myomorpha</taxon>
        <taxon>Muroidea</taxon>
        <taxon>Muridae</taxon>
        <taxon>Murinae</taxon>
        <taxon>Mus</taxon>
        <taxon>Mus</taxon>
    </lineage>
</organism>
<reference key="1">
    <citation type="journal article" date="2004" name="Genome Res.">
        <title>The status, quality, and expansion of the NIH full-length cDNA project: the Mammalian Gene Collection (MGC).</title>
        <authorList>
            <consortium name="The MGC Project Team"/>
        </authorList>
    </citation>
    <scope>NUCLEOTIDE SEQUENCE [LARGE SCALE MRNA]</scope>
    <source>
        <tissue>Heart</tissue>
    </source>
</reference>
<reference key="2">
    <citation type="journal article" date="2010" name="Cell">
        <title>A tissue-specific atlas of mouse protein phosphorylation and expression.</title>
        <authorList>
            <person name="Huttlin E.L."/>
            <person name="Jedrychowski M.P."/>
            <person name="Elias J.E."/>
            <person name="Goswami T."/>
            <person name="Rad R."/>
            <person name="Beausoleil S.A."/>
            <person name="Villen J."/>
            <person name="Haas W."/>
            <person name="Sowa M.E."/>
            <person name="Gygi S.P."/>
        </authorList>
    </citation>
    <scope>IDENTIFICATION BY MASS SPECTROMETRY [LARGE SCALE ANALYSIS]</scope>
    <source>
        <tissue>Brown adipose tissue</tissue>
        <tissue>Heart</tissue>
        <tissue>Lung</tissue>
    </source>
</reference>
<reference key="3">
    <citation type="journal article" date="2011" name="J. Mol. Cell. Cardiol.">
        <title>Disruption of the cyclic AMP phosphodiesterase-4 (PDE4)-HSP20 complex attenuates the beta-agonist induced hypertrophic response in cardiac myocytes.</title>
        <authorList>
            <person name="Sin Y.Y."/>
            <person name="Edwards H.V."/>
            <person name="Li X."/>
            <person name="Day J.P."/>
            <person name="Christian F."/>
            <person name="Dunlop A.J."/>
            <person name="Adams D.R."/>
            <person name="Zaccolo M."/>
            <person name="Houslay M.D."/>
            <person name="Baillie G.S."/>
        </authorList>
    </citation>
    <scope>PHOSPHORYLATION AT SER-16</scope>
</reference>
<name>HSPB6_MOUSE</name>
<keyword id="KW-0143">Chaperone</keyword>
<keyword id="KW-0963">Cytoplasm</keyword>
<keyword id="KW-0539">Nucleus</keyword>
<keyword id="KW-0597">Phosphoprotein</keyword>
<keyword id="KW-1185">Reference proteome</keyword>
<keyword id="KW-0964">Secreted</keyword>
<keyword id="KW-0346">Stress response</keyword>